<sequence>MNTARLNQGTPLLLNAVSKHYAENIVLNQLDLHIPAGQFVAVVGRSGGGKSTLLRLLAGLETPTAGDVLAGTTPLAEIQDDTRMMFQDARLLPWKSVIDNVGLGLKGQWHDAARQALAAVGLVNRAGEWPAALSGGQKQRVALARALIHRPGLLLLDEPLGALDALTRLEMQDLIVSLWQEHGFTVLLVTHDVSEAVAMADRVLLIEEGKIGLDLTVDIPRPRRLGSVRLAELEAEVLQRVMQRGHSEQPIRRHG</sequence>
<evidence type="ECO:0000255" key="1">
    <source>
        <dbReference type="HAMAP-Rule" id="MF_01724"/>
    </source>
</evidence>
<name>SSUB_ECOL5</name>
<protein>
    <recommendedName>
        <fullName evidence="1">Aliphatic sulfonates import ATP-binding protein SsuB</fullName>
        <ecNumber evidence="1">7.6.2.14</ecNumber>
    </recommendedName>
</protein>
<accession>Q0TJC1</accession>
<keyword id="KW-0067">ATP-binding</keyword>
<keyword id="KW-0997">Cell inner membrane</keyword>
<keyword id="KW-1003">Cell membrane</keyword>
<keyword id="KW-0472">Membrane</keyword>
<keyword id="KW-0547">Nucleotide-binding</keyword>
<keyword id="KW-1278">Translocase</keyword>
<keyword id="KW-0813">Transport</keyword>
<dbReference type="EC" id="7.6.2.14" evidence="1"/>
<dbReference type="EMBL" id="CP000247">
    <property type="protein sequence ID" value="ABG68958.1"/>
    <property type="molecule type" value="Genomic_DNA"/>
</dbReference>
<dbReference type="RefSeq" id="WP_001090482.1">
    <property type="nucleotide sequence ID" value="NC_008253.1"/>
</dbReference>
<dbReference type="SMR" id="Q0TJC1"/>
<dbReference type="KEGG" id="ecp:ECP_0945"/>
<dbReference type="HOGENOM" id="CLU_000604_1_22_6"/>
<dbReference type="Proteomes" id="UP000009182">
    <property type="component" value="Chromosome"/>
</dbReference>
<dbReference type="GO" id="GO:0005886">
    <property type="term" value="C:plasma membrane"/>
    <property type="evidence" value="ECO:0007669"/>
    <property type="project" value="UniProtKB-SubCell"/>
</dbReference>
<dbReference type="GO" id="GO:0005524">
    <property type="term" value="F:ATP binding"/>
    <property type="evidence" value="ECO:0007669"/>
    <property type="project" value="UniProtKB-KW"/>
</dbReference>
<dbReference type="GO" id="GO:0016887">
    <property type="term" value="F:ATP hydrolysis activity"/>
    <property type="evidence" value="ECO:0007669"/>
    <property type="project" value="InterPro"/>
</dbReference>
<dbReference type="CDD" id="cd03293">
    <property type="entry name" value="ABC_NrtD_SsuB_transporters"/>
    <property type="match status" value="1"/>
</dbReference>
<dbReference type="FunFam" id="3.40.50.300:FF:000653">
    <property type="entry name" value="Aliphatic sulfonates import ATP-binding protein SsuB"/>
    <property type="match status" value="1"/>
</dbReference>
<dbReference type="Gene3D" id="3.40.50.300">
    <property type="entry name" value="P-loop containing nucleotide triphosphate hydrolases"/>
    <property type="match status" value="1"/>
</dbReference>
<dbReference type="InterPro" id="IPR003593">
    <property type="entry name" value="AAA+_ATPase"/>
</dbReference>
<dbReference type="InterPro" id="IPR003439">
    <property type="entry name" value="ABC_transporter-like_ATP-bd"/>
</dbReference>
<dbReference type="InterPro" id="IPR017871">
    <property type="entry name" value="ABC_transporter-like_CS"/>
</dbReference>
<dbReference type="InterPro" id="IPR050166">
    <property type="entry name" value="ABC_transporter_ATP-bind"/>
</dbReference>
<dbReference type="InterPro" id="IPR027417">
    <property type="entry name" value="P-loop_NTPase"/>
</dbReference>
<dbReference type="NCBIfam" id="NF008420">
    <property type="entry name" value="PRK11247.1"/>
    <property type="match status" value="1"/>
</dbReference>
<dbReference type="PANTHER" id="PTHR42788:SF17">
    <property type="entry name" value="ALIPHATIC SULFONATES IMPORT ATP-BINDING PROTEIN SSUB"/>
    <property type="match status" value="1"/>
</dbReference>
<dbReference type="PANTHER" id="PTHR42788">
    <property type="entry name" value="TAURINE IMPORT ATP-BINDING PROTEIN-RELATED"/>
    <property type="match status" value="1"/>
</dbReference>
<dbReference type="Pfam" id="PF00005">
    <property type="entry name" value="ABC_tran"/>
    <property type="match status" value="1"/>
</dbReference>
<dbReference type="SMART" id="SM00382">
    <property type="entry name" value="AAA"/>
    <property type="match status" value="1"/>
</dbReference>
<dbReference type="SUPFAM" id="SSF52540">
    <property type="entry name" value="P-loop containing nucleoside triphosphate hydrolases"/>
    <property type="match status" value="1"/>
</dbReference>
<dbReference type="PROSITE" id="PS00211">
    <property type="entry name" value="ABC_TRANSPORTER_1"/>
    <property type="match status" value="1"/>
</dbReference>
<dbReference type="PROSITE" id="PS50893">
    <property type="entry name" value="ABC_TRANSPORTER_2"/>
    <property type="match status" value="1"/>
</dbReference>
<dbReference type="PROSITE" id="PS51291">
    <property type="entry name" value="SSUB"/>
    <property type="match status" value="1"/>
</dbReference>
<organism>
    <name type="scientific">Escherichia coli O6:K15:H31 (strain 536 / UPEC)</name>
    <dbReference type="NCBI Taxonomy" id="362663"/>
    <lineage>
        <taxon>Bacteria</taxon>
        <taxon>Pseudomonadati</taxon>
        <taxon>Pseudomonadota</taxon>
        <taxon>Gammaproteobacteria</taxon>
        <taxon>Enterobacterales</taxon>
        <taxon>Enterobacteriaceae</taxon>
        <taxon>Escherichia</taxon>
    </lineage>
</organism>
<comment type="function">
    <text evidence="1">Part of the ABC transporter complex SsuABC involved in aliphatic sulfonates import. Responsible for energy coupling to the transport system.</text>
</comment>
<comment type="catalytic activity">
    <reaction evidence="1">
        <text>ATP + H2O + aliphatic sulfonate-[sulfonate-binding protein]Side 1 = ADP + phosphate + aliphatic sulfonateSide 2 + [sulfonate-binding protein]Side 1.</text>
        <dbReference type="EC" id="7.6.2.14"/>
    </reaction>
</comment>
<comment type="subunit">
    <text evidence="1">The complex is composed of two ATP-binding proteins (SsuB), two transmembrane proteins (SsuC) and a solute-binding protein (SsuA).</text>
</comment>
<comment type="subcellular location">
    <subcellularLocation>
        <location evidence="1">Cell inner membrane</location>
        <topology evidence="1">Peripheral membrane protein</topology>
    </subcellularLocation>
</comment>
<comment type="similarity">
    <text evidence="1">Belongs to the ABC transporter superfamily. Aliphatic sulfonates importer (TC 3.A.1.17.2) family.</text>
</comment>
<proteinExistence type="inferred from homology"/>
<gene>
    <name evidence="1" type="primary">ssuB</name>
    <name type="ordered locus">ECP_0945</name>
</gene>
<feature type="chain" id="PRO_0000279915" description="Aliphatic sulfonates import ATP-binding protein SsuB">
    <location>
        <begin position="1"/>
        <end position="255"/>
    </location>
</feature>
<feature type="domain" description="ABC transporter" evidence="1">
    <location>
        <begin position="12"/>
        <end position="233"/>
    </location>
</feature>
<feature type="binding site" evidence="1">
    <location>
        <begin position="44"/>
        <end position="51"/>
    </location>
    <ligand>
        <name>ATP</name>
        <dbReference type="ChEBI" id="CHEBI:30616"/>
    </ligand>
</feature>
<reference key="1">
    <citation type="journal article" date="2006" name="Mol. Microbiol.">
        <title>Role of pathogenicity island-associated integrases in the genome plasticity of uropathogenic Escherichia coli strain 536.</title>
        <authorList>
            <person name="Hochhut B."/>
            <person name="Wilde C."/>
            <person name="Balling G."/>
            <person name="Middendorf B."/>
            <person name="Dobrindt U."/>
            <person name="Brzuszkiewicz E."/>
            <person name="Gottschalk G."/>
            <person name="Carniel E."/>
            <person name="Hacker J."/>
        </authorList>
    </citation>
    <scope>NUCLEOTIDE SEQUENCE [LARGE SCALE GENOMIC DNA]</scope>
    <source>
        <strain>536 / UPEC</strain>
    </source>
</reference>